<protein>
    <recommendedName>
        <fullName evidence="1">Thymidylate kinase</fullName>
        <ecNumber evidence="1">2.7.4.9</ecNumber>
    </recommendedName>
    <alternativeName>
        <fullName evidence="1">dTMP kinase</fullName>
    </alternativeName>
</protein>
<feature type="chain" id="PRO_0000155323" description="Thymidylate kinase">
    <location>
        <begin position="1"/>
        <end position="214"/>
    </location>
</feature>
<feature type="binding site" evidence="1">
    <location>
        <begin position="10"/>
        <end position="17"/>
    </location>
    <ligand>
        <name>ATP</name>
        <dbReference type="ChEBI" id="CHEBI:30616"/>
    </ligand>
</feature>
<proteinExistence type="inferred from homology"/>
<sequence>MRGKFIVIEGIDGCGKTTQIDEISKWIPTSGLLRGKQKLVKTREPGGSLLGKKIRNLILDNHKDNKPSSLAELLLYSADRAEHISKTISPALENQDWVLSDRFCDSTLAYQGYGRNINLEIIKNIESIVCQGESPDLTIFLEISAEESVLRREKFIPDRMESEGIKFLEKVNEGFKLIAKEKNWTTISALQDINTITNEIKETLLKKFSRVNND</sequence>
<comment type="function">
    <text evidence="1">Phosphorylation of dTMP to form dTDP in both de novo and salvage pathways of dTTP synthesis.</text>
</comment>
<comment type="catalytic activity">
    <reaction evidence="1">
        <text>dTMP + ATP = dTDP + ADP</text>
        <dbReference type="Rhea" id="RHEA:13517"/>
        <dbReference type="ChEBI" id="CHEBI:30616"/>
        <dbReference type="ChEBI" id="CHEBI:58369"/>
        <dbReference type="ChEBI" id="CHEBI:63528"/>
        <dbReference type="ChEBI" id="CHEBI:456216"/>
        <dbReference type="EC" id="2.7.4.9"/>
    </reaction>
</comment>
<comment type="similarity">
    <text evidence="1">Belongs to the thymidylate kinase family.</text>
</comment>
<accession>Q7V3E6</accession>
<keyword id="KW-0067">ATP-binding</keyword>
<keyword id="KW-0418">Kinase</keyword>
<keyword id="KW-0545">Nucleotide biosynthesis</keyword>
<keyword id="KW-0547">Nucleotide-binding</keyword>
<keyword id="KW-0808">Transferase</keyword>
<dbReference type="EC" id="2.7.4.9" evidence="1"/>
<dbReference type="EMBL" id="BX548174">
    <property type="protein sequence ID" value="CAE18589.1"/>
    <property type="molecule type" value="Genomic_DNA"/>
</dbReference>
<dbReference type="RefSeq" id="WP_011131769.1">
    <property type="nucleotide sequence ID" value="NC_005072.1"/>
</dbReference>
<dbReference type="SMR" id="Q7V3E6"/>
<dbReference type="STRING" id="59919.PMM0130"/>
<dbReference type="KEGG" id="pmm:PMM0130"/>
<dbReference type="eggNOG" id="COG0125">
    <property type="taxonomic scope" value="Bacteria"/>
</dbReference>
<dbReference type="HOGENOM" id="CLU_049131_0_2_3"/>
<dbReference type="OrthoDB" id="9774907at2"/>
<dbReference type="Proteomes" id="UP000001026">
    <property type="component" value="Chromosome"/>
</dbReference>
<dbReference type="GO" id="GO:0005829">
    <property type="term" value="C:cytosol"/>
    <property type="evidence" value="ECO:0007669"/>
    <property type="project" value="TreeGrafter"/>
</dbReference>
<dbReference type="GO" id="GO:0005524">
    <property type="term" value="F:ATP binding"/>
    <property type="evidence" value="ECO:0007669"/>
    <property type="project" value="UniProtKB-UniRule"/>
</dbReference>
<dbReference type="GO" id="GO:0004798">
    <property type="term" value="F:dTMP kinase activity"/>
    <property type="evidence" value="ECO:0007669"/>
    <property type="project" value="UniProtKB-UniRule"/>
</dbReference>
<dbReference type="GO" id="GO:0006233">
    <property type="term" value="P:dTDP biosynthetic process"/>
    <property type="evidence" value="ECO:0007669"/>
    <property type="project" value="InterPro"/>
</dbReference>
<dbReference type="GO" id="GO:0006235">
    <property type="term" value="P:dTTP biosynthetic process"/>
    <property type="evidence" value="ECO:0007669"/>
    <property type="project" value="UniProtKB-UniRule"/>
</dbReference>
<dbReference type="GO" id="GO:0006227">
    <property type="term" value="P:dUDP biosynthetic process"/>
    <property type="evidence" value="ECO:0007669"/>
    <property type="project" value="TreeGrafter"/>
</dbReference>
<dbReference type="CDD" id="cd01672">
    <property type="entry name" value="TMPK"/>
    <property type="match status" value="1"/>
</dbReference>
<dbReference type="FunFam" id="3.40.50.300:FF:000225">
    <property type="entry name" value="Thymidylate kinase"/>
    <property type="match status" value="1"/>
</dbReference>
<dbReference type="Gene3D" id="3.40.50.300">
    <property type="entry name" value="P-loop containing nucleotide triphosphate hydrolases"/>
    <property type="match status" value="1"/>
</dbReference>
<dbReference type="HAMAP" id="MF_00165">
    <property type="entry name" value="Thymidylate_kinase"/>
    <property type="match status" value="1"/>
</dbReference>
<dbReference type="InterPro" id="IPR027417">
    <property type="entry name" value="P-loop_NTPase"/>
</dbReference>
<dbReference type="InterPro" id="IPR039430">
    <property type="entry name" value="Thymidylate_kin-like_dom"/>
</dbReference>
<dbReference type="InterPro" id="IPR018095">
    <property type="entry name" value="Thymidylate_kin_CS"/>
</dbReference>
<dbReference type="InterPro" id="IPR018094">
    <property type="entry name" value="Thymidylate_kinase"/>
</dbReference>
<dbReference type="NCBIfam" id="TIGR00041">
    <property type="entry name" value="DTMP_kinase"/>
    <property type="match status" value="1"/>
</dbReference>
<dbReference type="PANTHER" id="PTHR10344">
    <property type="entry name" value="THYMIDYLATE KINASE"/>
    <property type="match status" value="1"/>
</dbReference>
<dbReference type="PANTHER" id="PTHR10344:SF4">
    <property type="entry name" value="UMP-CMP KINASE 2, MITOCHONDRIAL"/>
    <property type="match status" value="1"/>
</dbReference>
<dbReference type="Pfam" id="PF02223">
    <property type="entry name" value="Thymidylate_kin"/>
    <property type="match status" value="1"/>
</dbReference>
<dbReference type="SUPFAM" id="SSF52540">
    <property type="entry name" value="P-loop containing nucleoside triphosphate hydrolases"/>
    <property type="match status" value="1"/>
</dbReference>
<dbReference type="PROSITE" id="PS01331">
    <property type="entry name" value="THYMIDYLATE_KINASE"/>
    <property type="match status" value="1"/>
</dbReference>
<gene>
    <name evidence="1" type="primary">tmk</name>
    <name type="ordered locus">PMM0130</name>
</gene>
<reference key="1">
    <citation type="journal article" date="2003" name="Nature">
        <title>Genome divergence in two Prochlorococcus ecotypes reflects oceanic niche differentiation.</title>
        <authorList>
            <person name="Rocap G."/>
            <person name="Larimer F.W."/>
            <person name="Lamerdin J.E."/>
            <person name="Malfatti S."/>
            <person name="Chain P."/>
            <person name="Ahlgren N.A."/>
            <person name="Arellano A."/>
            <person name="Coleman M."/>
            <person name="Hauser L."/>
            <person name="Hess W.R."/>
            <person name="Johnson Z.I."/>
            <person name="Land M.L."/>
            <person name="Lindell D."/>
            <person name="Post A.F."/>
            <person name="Regala W."/>
            <person name="Shah M."/>
            <person name="Shaw S.L."/>
            <person name="Steglich C."/>
            <person name="Sullivan M.B."/>
            <person name="Ting C.S."/>
            <person name="Tolonen A."/>
            <person name="Webb E.A."/>
            <person name="Zinser E.R."/>
            <person name="Chisholm S.W."/>
        </authorList>
    </citation>
    <scope>NUCLEOTIDE SEQUENCE [LARGE SCALE GENOMIC DNA]</scope>
    <source>
        <strain>CCMP1986 / NIES-2087 / MED4</strain>
    </source>
</reference>
<evidence type="ECO:0000255" key="1">
    <source>
        <dbReference type="HAMAP-Rule" id="MF_00165"/>
    </source>
</evidence>
<organism>
    <name type="scientific">Prochlorococcus marinus subsp. pastoris (strain CCMP1986 / NIES-2087 / MED4)</name>
    <dbReference type="NCBI Taxonomy" id="59919"/>
    <lineage>
        <taxon>Bacteria</taxon>
        <taxon>Bacillati</taxon>
        <taxon>Cyanobacteriota</taxon>
        <taxon>Cyanophyceae</taxon>
        <taxon>Synechococcales</taxon>
        <taxon>Prochlorococcaceae</taxon>
        <taxon>Prochlorococcus</taxon>
    </lineage>
</organism>
<name>KTHY_PROMP</name>